<name>YAII_SALA4</name>
<evidence type="ECO:0000255" key="1">
    <source>
        <dbReference type="HAMAP-Rule" id="MF_00489"/>
    </source>
</evidence>
<sequence>MTIWVDADACPNVIKEILYRAAERMQLPLILVANQALRVPPSRFIRTLRVAAGFDVADNEIVRQCEAGDLVITADIPLAAEVLEKGAAALNPRGERYSDATIRERLTMRDFMDTLRASGVQTGGPNTLSPRDRQHFAAELDKWWLESQRKK</sequence>
<dbReference type="EMBL" id="CP001138">
    <property type="protein sequence ID" value="ACH52735.1"/>
    <property type="molecule type" value="Genomic_DNA"/>
</dbReference>
<dbReference type="RefSeq" id="WP_000158137.1">
    <property type="nucleotide sequence ID" value="NC_011149.1"/>
</dbReference>
<dbReference type="KEGG" id="sea:SeAg_B0424"/>
<dbReference type="HOGENOM" id="CLU_106619_1_0_6"/>
<dbReference type="Proteomes" id="UP000008819">
    <property type="component" value="Chromosome"/>
</dbReference>
<dbReference type="CDD" id="cd18720">
    <property type="entry name" value="PIN_YqxD-like"/>
    <property type="match status" value="1"/>
</dbReference>
<dbReference type="HAMAP" id="MF_00489">
    <property type="entry name" value="UPF0178"/>
    <property type="match status" value="1"/>
</dbReference>
<dbReference type="InterPro" id="IPR003791">
    <property type="entry name" value="UPF0178"/>
</dbReference>
<dbReference type="NCBIfam" id="NF001095">
    <property type="entry name" value="PRK00124.1"/>
    <property type="match status" value="1"/>
</dbReference>
<dbReference type="PANTHER" id="PTHR35146">
    <property type="entry name" value="UPF0178 PROTEIN YAII"/>
    <property type="match status" value="1"/>
</dbReference>
<dbReference type="PANTHER" id="PTHR35146:SF1">
    <property type="entry name" value="UPF0178 PROTEIN YAII"/>
    <property type="match status" value="1"/>
</dbReference>
<dbReference type="Pfam" id="PF02639">
    <property type="entry name" value="DUF188"/>
    <property type="match status" value="1"/>
</dbReference>
<comment type="similarity">
    <text evidence="1">Belongs to the UPF0178 family.</text>
</comment>
<reference key="1">
    <citation type="journal article" date="2011" name="J. Bacteriol.">
        <title>Comparative genomics of 28 Salmonella enterica isolates: evidence for CRISPR-mediated adaptive sublineage evolution.</title>
        <authorList>
            <person name="Fricke W.F."/>
            <person name="Mammel M.K."/>
            <person name="McDermott P.F."/>
            <person name="Tartera C."/>
            <person name="White D.G."/>
            <person name="Leclerc J.E."/>
            <person name="Ravel J."/>
            <person name="Cebula T.A."/>
        </authorList>
    </citation>
    <scope>NUCLEOTIDE SEQUENCE [LARGE SCALE GENOMIC DNA]</scope>
    <source>
        <strain>SL483</strain>
    </source>
</reference>
<accession>B5EWR9</accession>
<feature type="chain" id="PRO_1000126207" description="UPF0178 protein YaiI">
    <location>
        <begin position="1"/>
        <end position="151"/>
    </location>
</feature>
<protein>
    <recommendedName>
        <fullName evidence="1">UPF0178 protein YaiI</fullName>
    </recommendedName>
</protein>
<proteinExistence type="inferred from homology"/>
<organism>
    <name type="scientific">Salmonella agona (strain SL483)</name>
    <dbReference type="NCBI Taxonomy" id="454166"/>
    <lineage>
        <taxon>Bacteria</taxon>
        <taxon>Pseudomonadati</taxon>
        <taxon>Pseudomonadota</taxon>
        <taxon>Gammaproteobacteria</taxon>
        <taxon>Enterobacterales</taxon>
        <taxon>Enterobacteriaceae</taxon>
        <taxon>Salmonella</taxon>
    </lineage>
</organism>
<gene>
    <name evidence="1" type="primary">yaiI</name>
    <name type="ordered locus">SeAg_B0424</name>
</gene>